<gene>
    <name type="primary">soxS</name>
    <name type="ordered locus">c5053</name>
</gene>
<comment type="function">
    <text evidence="1">Transcriptional activator of the superoxide response regulon of E.coli that includes at least 10 genes such as sodA, nfo, zwf and micF. Binds the DNA sequence 5'-GCACN(7)CAA-3'. It also facilitates the subsequent binding of RNA polymerase to the micF and the nfo promoters (By similarity).</text>
</comment>
<comment type="subcellular location">
    <subcellularLocation>
        <location evidence="3">Cytoplasm</location>
    </subcellularLocation>
</comment>
<feature type="initiator methionine" description="Removed" evidence="1">
    <location>
        <position position="1"/>
    </location>
</feature>
<feature type="chain" id="PRO_0000194585" description="Regulatory protein SoxS">
    <location>
        <begin position="2"/>
        <end position="107"/>
    </location>
</feature>
<feature type="domain" description="HTH araC/xylS-type" evidence="2">
    <location>
        <begin position="8"/>
        <end position="106"/>
    </location>
</feature>
<feature type="DNA-binding region" description="H-T-H motif" evidence="2">
    <location>
        <begin position="25"/>
        <end position="46"/>
    </location>
</feature>
<feature type="DNA-binding region" description="H-T-H motif" evidence="2">
    <location>
        <begin position="73"/>
        <end position="96"/>
    </location>
</feature>
<reference key="1">
    <citation type="journal article" date="2002" name="Proc. Natl. Acad. Sci. U.S.A.">
        <title>Extensive mosaic structure revealed by the complete genome sequence of uropathogenic Escherichia coli.</title>
        <authorList>
            <person name="Welch R.A."/>
            <person name="Burland V."/>
            <person name="Plunkett G. III"/>
            <person name="Redford P."/>
            <person name="Roesch P."/>
            <person name="Rasko D."/>
            <person name="Buckles E.L."/>
            <person name="Liou S.-R."/>
            <person name="Boutin A."/>
            <person name="Hackett J."/>
            <person name="Stroud D."/>
            <person name="Mayhew G.F."/>
            <person name="Rose D.J."/>
            <person name="Zhou S."/>
            <person name="Schwartz D.C."/>
            <person name="Perna N.T."/>
            <person name="Mobley H.L.T."/>
            <person name="Donnenberg M.S."/>
            <person name="Blattner F.R."/>
        </authorList>
    </citation>
    <scope>NUCLEOTIDE SEQUENCE [LARGE SCALE GENOMIC DNA]</scope>
    <source>
        <strain>CFT073 / ATCC 700928 / UPEC</strain>
    </source>
</reference>
<keyword id="KW-0010">Activator</keyword>
<keyword id="KW-0963">Cytoplasm</keyword>
<keyword id="KW-0238">DNA-binding</keyword>
<keyword id="KW-1185">Reference proteome</keyword>
<keyword id="KW-0804">Transcription</keyword>
<keyword id="KW-0805">Transcription regulation</keyword>
<proteinExistence type="inferred from homology"/>
<organism>
    <name type="scientific">Escherichia coli O6:H1 (strain CFT073 / ATCC 700928 / UPEC)</name>
    <dbReference type="NCBI Taxonomy" id="199310"/>
    <lineage>
        <taxon>Bacteria</taxon>
        <taxon>Pseudomonadati</taxon>
        <taxon>Pseudomonadota</taxon>
        <taxon>Gammaproteobacteria</taxon>
        <taxon>Enterobacterales</taxon>
        <taxon>Enterobacteriaceae</taxon>
        <taxon>Escherichia</taxon>
    </lineage>
</organism>
<sequence length="107" mass="12911">MSHQKIIQDLIAWIDEHIDQPLNIDVVAKKSGYSKWYLQRMFRTVTHQTLGDYIRQRRLLLAAVELRTTERPIFDIAMDLGYVSQQTFSRVFRRQFDRTPSDYRHRL</sequence>
<dbReference type="EMBL" id="AE014075">
    <property type="protein sequence ID" value="AAN83479.1"/>
    <property type="molecule type" value="Genomic_DNA"/>
</dbReference>
<dbReference type="RefSeq" id="WP_000019358.1">
    <property type="nucleotide sequence ID" value="NZ_CP051263.1"/>
</dbReference>
<dbReference type="SMR" id="P0A9E3"/>
<dbReference type="STRING" id="199310.c5053"/>
<dbReference type="GeneID" id="93777769"/>
<dbReference type="KEGG" id="ecc:c5053"/>
<dbReference type="eggNOG" id="COG2207">
    <property type="taxonomic scope" value="Bacteria"/>
</dbReference>
<dbReference type="HOGENOM" id="CLU_000445_81_14_6"/>
<dbReference type="BioCyc" id="ECOL199310:C5053-MONOMER"/>
<dbReference type="Proteomes" id="UP000001410">
    <property type="component" value="Chromosome"/>
</dbReference>
<dbReference type="GO" id="GO:0005737">
    <property type="term" value="C:cytoplasm"/>
    <property type="evidence" value="ECO:0007669"/>
    <property type="project" value="UniProtKB-SubCell"/>
</dbReference>
<dbReference type="GO" id="GO:0003700">
    <property type="term" value="F:DNA-binding transcription factor activity"/>
    <property type="evidence" value="ECO:0007669"/>
    <property type="project" value="InterPro"/>
</dbReference>
<dbReference type="GO" id="GO:0043565">
    <property type="term" value="F:sequence-specific DNA binding"/>
    <property type="evidence" value="ECO:0007669"/>
    <property type="project" value="InterPro"/>
</dbReference>
<dbReference type="FunFam" id="1.10.10.60:FF:000030">
    <property type="entry name" value="DNA-binding transcriptional regulator SoxS"/>
    <property type="match status" value="1"/>
</dbReference>
<dbReference type="Gene3D" id="1.10.10.60">
    <property type="entry name" value="Homeodomain-like"/>
    <property type="match status" value="2"/>
</dbReference>
<dbReference type="InterPro" id="IPR009057">
    <property type="entry name" value="Homeodomain-like_sf"/>
</dbReference>
<dbReference type="InterPro" id="IPR018060">
    <property type="entry name" value="HTH_AraC"/>
</dbReference>
<dbReference type="InterPro" id="IPR018062">
    <property type="entry name" value="HTH_AraC-typ_CS"/>
</dbReference>
<dbReference type="InterPro" id="IPR050959">
    <property type="entry name" value="MarA-like"/>
</dbReference>
<dbReference type="InterPro" id="IPR020449">
    <property type="entry name" value="Tscrpt_reg_AraC-type_HTH"/>
</dbReference>
<dbReference type="NCBIfam" id="NF007584">
    <property type="entry name" value="PRK10219.1"/>
    <property type="match status" value="1"/>
</dbReference>
<dbReference type="PANTHER" id="PTHR47504:SF2">
    <property type="entry name" value="REGULATORY PROTEIN SOXS"/>
    <property type="match status" value="1"/>
</dbReference>
<dbReference type="PANTHER" id="PTHR47504">
    <property type="entry name" value="RIGHT ORIGIN-BINDING PROTEIN"/>
    <property type="match status" value="1"/>
</dbReference>
<dbReference type="Pfam" id="PF12833">
    <property type="entry name" value="HTH_18"/>
    <property type="match status" value="1"/>
</dbReference>
<dbReference type="PRINTS" id="PR00032">
    <property type="entry name" value="HTHARAC"/>
</dbReference>
<dbReference type="SMART" id="SM00342">
    <property type="entry name" value="HTH_ARAC"/>
    <property type="match status" value="1"/>
</dbReference>
<dbReference type="SUPFAM" id="SSF46689">
    <property type="entry name" value="Homeodomain-like"/>
    <property type="match status" value="2"/>
</dbReference>
<dbReference type="PROSITE" id="PS00041">
    <property type="entry name" value="HTH_ARAC_FAMILY_1"/>
    <property type="match status" value="1"/>
</dbReference>
<dbReference type="PROSITE" id="PS01124">
    <property type="entry name" value="HTH_ARAC_FAMILY_2"/>
    <property type="match status" value="1"/>
</dbReference>
<protein>
    <recommendedName>
        <fullName>Regulatory protein SoxS</fullName>
    </recommendedName>
</protein>
<name>SOXS_ECOL6</name>
<evidence type="ECO:0000250" key="1"/>
<evidence type="ECO:0000255" key="2">
    <source>
        <dbReference type="PROSITE-ProRule" id="PRU00593"/>
    </source>
</evidence>
<evidence type="ECO:0000305" key="3"/>
<accession>P0A9E3</accession>
<accession>P22539</accession>